<organism>
    <name type="scientific">Pseudomonas savastanoi pv. phaseolicola (strain 1448A / Race 6)</name>
    <name type="common">Pseudomonas syringae pv. phaseolicola (strain 1448A / Race 6)</name>
    <dbReference type="NCBI Taxonomy" id="264730"/>
    <lineage>
        <taxon>Bacteria</taxon>
        <taxon>Pseudomonadati</taxon>
        <taxon>Pseudomonadota</taxon>
        <taxon>Gammaproteobacteria</taxon>
        <taxon>Pseudomonadales</taxon>
        <taxon>Pseudomonadaceae</taxon>
        <taxon>Pseudomonas</taxon>
    </lineage>
</organism>
<proteinExistence type="inferred from homology"/>
<accession>Q48JS3</accession>
<protein>
    <recommendedName>
        <fullName evidence="1">Threonine--tRNA ligase</fullName>
        <ecNumber evidence="1">6.1.1.3</ecNumber>
    </recommendedName>
    <alternativeName>
        <fullName evidence="1">Threonyl-tRNA synthetase</fullName>
        <shortName evidence="1">ThrRS</shortName>
    </alternativeName>
</protein>
<sequence>MPTITLPDGSQRSFDHVVSVADVALSIGAGLAKATVAGKVDGKLVDACDLIENDASLQIITPKDQEGLEIIRHSCAHLVGHAVKQLYPTAKMVIGPVIDDGFYYDIAYERPFTPDDMAAIEQRMQQLIEKDYDVIKKVTPRAEVIEVFTARHEDYKLRLVEDMPNEQAMGLYYHEEYVDMCRGPHVPNTRFLKSFKLTKLSGAYWRGDAKNEQLQRVYGTAWADKKQLAAYIQRIEEAEKRDHRKIGKRLGLFHTQEEAPGMVFWHPQGWTLYQVLEQYMRKVQRENGYLEIKTPQVVDRSLWEKSGHWANYADNMFTTESESRDYAIKPMNCPCHVQVFNQGLKSYRELPMRLAEFGACHRNEPSGALHGIMRVRGFTQDDAHIFCTEDQMQAESAAFIKLTLDVYADFGFKDIELKLSTRPEKRVGSDELWERAETALASALDSAGLPYDLQPGEGAFYGPKIEFSLKDCLGRVWQCGTLQLDFNLPIRLSAEYVSEDNSRKNPVMLHRAILGSFERFIGILIEHYEGAFPAWLAPTQAVIMNITDKQADFALEVEKTLAESGFRAKSDLRNEKIGFKIREHTLLKVPYLLVIGDREVEMQTVAVRTREGADLGSMPVAQFAEFLAQAVSRRGRQDTE</sequence>
<reference key="1">
    <citation type="journal article" date="2005" name="J. Bacteriol.">
        <title>Whole-genome sequence analysis of Pseudomonas syringae pv. phaseolicola 1448A reveals divergence among pathovars in genes involved in virulence and transposition.</title>
        <authorList>
            <person name="Joardar V."/>
            <person name="Lindeberg M."/>
            <person name="Jackson R.W."/>
            <person name="Selengut J."/>
            <person name="Dodson R."/>
            <person name="Brinkac L.M."/>
            <person name="Daugherty S.C."/>
            <person name="DeBoy R.T."/>
            <person name="Durkin A.S."/>
            <person name="Gwinn Giglio M."/>
            <person name="Madupu R."/>
            <person name="Nelson W.C."/>
            <person name="Rosovitz M.J."/>
            <person name="Sullivan S.A."/>
            <person name="Crabtree J."/>
            <person name="Creasy T."/>
            <person name="Davidsen T.M."/>
            <person name="Haft D.H."/>
            <person name="Zafar N."/>
            <person name="Zhou L."/>
            <person name="Halpin R."/>
            <person name="Holley T."/>
            <person name="Khouri H.M."/>
            <person name="Feldblyum T.V."/>
            <person name="White O."/>
            <person name="Fraser C.M."/>
            <person name="Chatterjee A.K."/>
            <person name="Cartinhour S."/>
            <person name="Schneider D."/>
            <person name="Mansfield J.W."/>
            <person name="Collmer A."/>
            <person name="Buell R."/>
        </authorList>
    </citation>
    <scope>NUCLEOTIDE SEQUENCE [LARGE SCALE GENOMIC DNA]</scope>
    <source>
        <strain>1448A / Race 6</strain>
    </source>
</reference>
<dbReference type="EC" id="6.1.1.3" evidence="1"/>
<dbReference type="EMBL" id="CP000058">
    <property type="protein sequence ID" value="AAZ35595.1"/>
    <property type="molecule type" value="Genomic_DNA"/>
</dbReference>
<dbReference type="RefSeq" id="WP_011168395.1">
    <property type="nucleotide sequence ID" value="NC_005773.3"/>
</dbReference>
<dbReference type="SMR" id="Q48JS3"/>
<dbReference type="KEGG" id="psp:PSPPH_2135"/>
<dbReference type="eggNOG" id="COG0441">
    <property type="taxonomic scope" value="Bacteria"/>
</dbReference>
<dbReference type="HOGENOM" id="CLU_008554_0_1_6"/>
<dbReference type="Proteomes" id="UP000000551">
    <property type="component" value="Chromosome"/>
</dbReference>
<dbReference type="GO" id="GO:0005829">
    <property type="term" value="C:cytosol"/>
    <property type="evidence" value="ECO:0007669"/>
    <property type="project" value="TreeGrafter"/>
</dbReference>
<dbReference type="GO" id="GO:0005524">
    <property type="term" value="F:ATP binding"/>
    <property type="evidence" value="ECO:0007669"/>
    <property type="project" value="UniProtKB-UniRule"/>
</dbReference>
<dbReference type="GO" id="GO:0046872">
    <property type="term" value="F:metal ion binding"/>
    <property type="evidence" value="ECO:0007669"/>
    <property type="project" value="UniProtKB-KW"/>
</dbReference>
<dbReference type="GO" id="GO:0004829">
    <property type="term" value="F:threonine-tRNA ligase activity"/>
    <property type="evidence" value="ECO:0007669"/>
    <property type="project" value="UniProtKB-UniRule"/>
</dbReference>
<dbReference type="GO" id="GO:0000049">
    <property type="term" value="F:tRNA binding"/>
    <property type="evidence" value="ECO:0007669"/>
    <property type="project" value="UniProtKB-KW"/>
</dbReference>
<dbReference type="GO" id="GO:0006435">
    <property type="term" value="P:threonyl-tRNA aminoacylation"/>
    <property type="evidence" value="ECO:0007669"/>
    <property type="project" value="UniProtKB-UniRule"/>
</dbReference>
<dbReference type="CDD" id="cd01667">
    <property type="entry name" value="TGS_ThrRS"/>
    <property type="match status" value="1"/>
</dbReference>
<dbReference type="CDD" id="cd00860">
    <property type="entry name" value="ThrRS_anticodon"/>
    <property type="match status" value="1"/>
</dbReference>
<dbReference type="CDD" id="cd00771">
    <property type="entry name" value="ThrRS_core"/>
    <property type="match status" value="1"/>
</dbReference>
<dbReference type="FunFam" id="3.10.20.30:FF:000005">
    <property type="entry name" value="Threonine--tRNA ligase"/>
    <property type="match status" value="1"/>
</dbReference>
<dbReference type="FunFam" id="3.30.54.20:FF:000002">
    <property type="entry name" value="Threonine--tRNA ligase"/>
    <property type="match status" value="1"/>
</dbReference>
<dbReference type="FunFam" id="3.30.930.10:FF:000002">
    <property type="entry name" value="Threonine--tRNA ligase"/>
    <property type="match status" value="1"/>
</dbReference>
<dbReference type="FunFam" id="3.40.50.800:FF:000001">
    <property type="entry name" value="Threonine--tRNA ligase"/>
    <property type="match status" value="1"/>
</dbReference>
<dbReference type="FunFam" id="3.30.980.10:FF:000005">
    <property type="entry name" value="Threonyl-tRNA synthetase, mitochondrial"/>
    <property type="match status" value="1"/>
</dbReference>
<dbReference type="Gene3D" id="3.10.20.30">
    <property type="match status" value="1"/>
</dbReference>
<dbReference type="Gene3D" id="3.30.54.20">
    <property type="match status" value="1"/>
</dbReference>
<dbReference type="Gene3D" id="3.40.50.800">
    <property type="entry name" value="Anticodon-binding domain"/>
    <property type="match status" value="1"/>
</dbReference>
<dbReference type="Gene3D" id="3.30.930.10">
    <property type="entry name" value="Bira Bifunctional Protein, Domain 2"/>
    <property type="match status" value="1"/>
</dbReference>
<dbReference type="Gene3D" id="3.30.980.10">
    <property type="entry name" value="Threonyl-trna Synthetase, Chain A, domain 2"/>
    <property type="match status" value="1"/>
</dbReference>
<dbReference type="HAMAP" id="MF_00184">
    <property type="entry name" value="Thr_tRNA_synth"/>
    <property type="match status" value="1"/>
</dbReference>
<dbReference type="InterPro" id="IPR002314">
    <property type="entry name" value="aa-tRNA-synt_IIb"/>
</dbReference>
<dbReference type="InterPro" id="IPR006195">
    <property type="entry name" value="aa-tRNA-synth_II"/>
</dbReference>
<dbReference type="InterPro" id="IPR045864">
    <property type="entry name" value="aa-tRNA-synth_II/BPL/LPL"/>
</dbReference>
<dbReference type="InterPro" id="IPR004154">
    <property type="entry name" value="Anticodon-bd"/>
</dbReference>
<dbReference type="InterPro" id="IPR036621">
    <property type="entry name" value="Anticodon-bd_dom_sf"/>
</dbReference>
<dbReference type="InterPro" id="IPR012675">
    <property type="entry name" value="Beta-grasp_dom_sf"/>
</dbReference>
<dbReference type="InterPro" id="IPR004095">
    <property type="entry name" value="TGS"/>
</dbReference>
<dbReference type="InterPro" id="IPR012676">
    <property type="entry name" value="TGS-like"/>
</dbReference>
<dbReference type="InterPro" id="IPR002320">
    <property type="entry name" value="Thr-tRNA-ligase_IIa"/>
</dbReference>
<dbReference type="InterPro" id="IPR018163">
    <property type="entry name" value="Thr/Ala-tRNA-synth_IIc_edit"/>
</dbReference>
<dbReference type="InterPro" id="IPR047246">
    <property type="entry name" value="ThrRS_anticodon"/>
</dbReference>
<dbReference type="InterPro" id="IPR033728">
    <property type="entry name" value="ThrRS_core"/>
</dbReference>
<dbReference type="InterPro" id="IPR012947">
    <property type="entry name" value="tRNA_SAD"/>
</dbReference>
<dbReference type="NCBIfam" id="TIGR00418">
    <property type="entry name" value="thrS"/>
    <property type="match status" value="1"/>
</dbReference>
<dbReference type="PANTHER" id="PTHR11451:SF44">
    <property type="entry name" value="THREONINE--TRNA LIGASE, CHLOROPLASTIC_MITOCHONDRIAL 2"/>
    <property type="match status" value="1"/>
</dbReference>
<dbReference type="PANTHER" id="PTHR11451">
    <property type="entry name" value="THREONINE-TRNA LIGASE"/>
    <property type="match status" value="1"/>
</dbReference>
<dbReference type="Pfam" id="PF03129">
    <property type="entry name" value="HGTP_anticodon"/>
    <property type="match status" value="1"/>
</dbReference>
<dbReference type="Pfam" id="PF02824">
    <property type="entry name" value="TGS"/>
    <property type="match status" value="1"/>
</dbReference>
<dbReference type="Pfam" id="PF00587">
    <property type="entry name" value="tRNA-synt_2b"/>
    <property type="match status" value="1"/>
</dbReference>
<dbReference type="Pfam" id="PF07973">
    <property type="entry name" value="tRNA_SAD"/>
    <property type="match status" value="1"/>
</dbReference>
<dbReference type="PRINTS" id="PR01047">
    <property type="entry name" value="TRNASYNTHTHR"/>
</dbReference>
<dbReference type="SMART" id="SM00863">
    <property type="entry name" value="tRNA_SAD"/>
    <property type="match status" value="1"/>
</dbReference>
<dbReference type="SUPFAM" id="SSF52954">
    <property type="entry name" value="Class II aaRS ABD-related"/>
    <property type="match status" value="1"/>
</dbReference>
<dbReference type="SUPFAM" id="SSF55681">
    <property type="entry name" value="Class II aaRS and biotin synthetases"/>
    <property type="match status" value="1"/>
</dbReference>
<dbReference type="SUPFAM" id="SSF81271">
    <property type="entry name" value="TGS-like"/>
    <property type="match status" value="1"/>
</dbReference>
<dbReference type="SUPFAM" id="SSF55186">
    <property type="entry name" value="ThrRS/AlaRS common domain"/>
    <property type="match status" value="1"/>
</dbReference>
<dbReference type="PROSITE" id="PS50862">
    <property type="entry name" value="AA_TRNA_LIGASE_II"/>
    <property type="match status" value="1"/>
</dbReference>
<dbReference type="PROSITE" id="PS51880">
    <property type="entry name" value="TGS"/>
    <property type="match status" value="1"/>
</dbReference>
<keyword id="KW-0030">Aminoacyl-tRNA synthetase</keyword>
<keyword id="KW-0067">ATP-binding</keyword>
<keyword id="KW-0963">Cytoplasm</keyword>
<keyword id="KW-0436">Ligase</keyword>
<keyword id="KW-0479">Metal-binding</keyword>
<keyword id="KW-0547">Nucleotide-binding</keyword>
<keyword id="KW-0648">Protein biosynthesis</keyword>
<keyword id="KW-0694">RNA-binding</keyword>
<keyword id="KW-0820">tRNA-binding</keyword>
<keyword id="KW-0862">Zinc</keyword>
<feature type="chain" id="PRO_1000020469" description="Threonine--tRNA ligase">
    <location>
        <begin position="1"/>
        <end position="640"/>
    </location>
</feature>
<feature type="domain" description="TGS" evidence="2">
    <location>
        <begin position="1"/>
        <end position="61"/>
    </location>
</feature>
<feature type="region of interest" description="Catalytic" evidence="1">
    <location>
        <begin position="242"/>
        <end position="533"/>
    </location>
</feature>
<feature type="binding site" evidence="1">
    <location>
        <position position="333"/>
    </location>
    <ligand>
        <name>Zn(2+)</name>
        <dbReference type="ChEBI" id="CHEBI:29105"/>
    </ligand>
</feature>
<feature type="binding site" evidence="1">
    <location>
        <position position="384"/>
    </location>
    <ligand>
        <name>Zn(2+)</name>
        <dbReference type="ChEBI" id="CHEBI:29105"/>
    </ligand>
</feature>
<feature type="binding site" evidence="1">
    <location>
        <position position="510"/>
    </location>
    <ligand>
        <name>Zn(2+)</name>
        <dbReference type="ChEBI" id="CHEBI:29105"/>
    </ligand>
</feature>
<gene>
    <name evidence="1" type="primary">thrS</name>
    <name type="ordered locus">PSPPH_2135</name>
</gene>
<comment type="function">
    <text evidence="1">Catalyzes the attachment of threonine to tRNA(Thr) in a two-step reaction: L-threonine is first activated by ATP to form Thr-AMP and then transferred to the acceptor end of tRNA(Thr). Also edits incorrectly charged L-seryl-tRNA(Thr).</text>
</comment>
<comment type="catalytic activity">
    <reaction evidence="1">
        <text>tRNA(Thr) + L-threonine + ATP = L-threonyl-tRNA(Thr) + AMP + diphosphate + H(+)</text>
        <dbReference type="Rhea" id="RHEA:24624"/>
        <dbReference type="Rhea" id="RHEA-COMP:9670"/>
        <dbReference type="Rhea" id="RHEA-COMP:9704"/>
        <dbReference type="ChEBI" id="CHEBI:15378"/>
        <dbReference type="ChEBI" id="CHEBI:30616"/>
        <dbReference type="ChEBI" id="CHEBI:33019"/>
        <dbReference type="ChEBI" id="CHEBI:57926"/>
        <dbReference type="ChEBI" id="CHEBI:78442"/>
        <dbReference type="ChEBI" id="CHEBI:78534"/>
        <dbReference type="ChEBI" id="CHEBI:456215"/>
        <dbReference type="EC" id="6.1.1.3"/>
    </reaction>
</comment>
<comment type="cofactor">
    <cofactor evidence="1">
        <name>Zn(2+)</name>
        <dbReference type="ChEBI" id="CHEBI:29105"/>
    </cofactor>
    <text evidence="1">Binds 1 zinc ion per subunit.</text>
</comment>
<comment type="subunit">
    <text evidence="1">Homodimer.</text>
</comment>
<comment type="subcellular location">
    <subcellularLocation>
        <location evidence="1">Cytoplasm</location>
    </subcellularLocation>
</comment>
<comment type="similarity">
    <text evidence="1">Belongs to the class-II aminoacyl-tRNA synthetase family.</text>
</comment>
<evidence type="ECO:0000255" key="1">
    <source>
        <dbReference type="HAMAP-Rule" id="MF_00184"/>
    </source>
</evidence>
<evidence type="ECO:0000255" key="2">
    <source>
        <dbReference type="PROSITE-ProRule" id="PRU01228"/>
    </source>
</evidence>
<name>SYT_PSE14</name>